<accession>Q1IS49</accession>
<organism>
    <name type="scientific">Koribacter versatilis (strain Ellin345)</name>
    <dbReference type="NCBI Taxonomy" id="204669"/>
    <lineage>
        <taxon>Bacteria</taxon>
        <taxon>Pseudomonadati</taxon>
        <taxon>Acidobacteriota</taxon>
        <taxon>Terriglobia</taxon>
        <taxon>Terriglobales</taxon>
        <taxon>Candidatus Korobacteraceae</taxon>
        <taxon>Candidatus Korobacter</taxon>
    </lineage>
</organism>
<proteinExistence type="inferred from homology"/>
<gene>
    <name evidence="1" type="primary">atpB</name>
    <name type="ordered locus">Acid345_1299</name>
</gene>
<feature type="chain" id="PRO_0000362217" description="ATP synthase subunit a">
    <location>
        <begin position="1"/>
        <end position="245"/>
    </location>
</feature>
<feature type="transmembrane region" description="Helical" evidence="1">
    <location>
        <begin position="5"/>
        <end position="25"/>
    </location>
</feature>
<feature type="transmembrane region" description="Helical" evidence="1">
    <location>
        <begin position="37"/>
        <end position="57"/>
    </location>
</feature>
<feature type="transmembrane region" description="Helical" evidence="1">
    <location>
        <begin position="99"/>
        <end position="119"/>
    </location>
</feature>
<feature type="transmembrane region" description="Helical" evidence="1">
    <location>
        <begin position="125"/>
        <end position="145"/>
    </location>
</feature>
<feature type="transmembrane region" description="Helical" evidence="1">
    <location>
        <begin position="157"/>
        <end position="177"/>
    </location>
</feature>
<feature type="transmembrane region" description="Helical" evidence="1">
    <location>
        <begin position="187"/>
        <end position="209"/>
    </location>
</feature>
<feature type="transmembrane region" description="Helical" evidence="1">
    <location>
        <begin position="221"/>
        <end position="241"/>
    </location>
</feature>
<reference key="1">
    <citation type="journal article" date="2009" name="Appl. Environ. Microbiol.">
        <title>Three genomes from the phylum Acidobacteria provide insight into the lifestyles of these microorganisms in soils.</title>
        <authorList>
            <person name="Ward N.L."/>
            <person name="Challacombe J.F."/>
            <person name="Janssen P.H."/>
            <person name="Henrissat B."/>
            <person name="Coutinho P.M."/>
            <person name="Wu M."/>
            <person name="Xie G."/>
            <person name="Haft D.H."/>
            <person name="Sait M."/>
            <person name="Badger J."/>
            <person name="Barabote R.D."/>
            <person name="Bradley B."/>
            <person name="Brettin T.S."/>
            <person name="Brinkac L.M."/>
            <person name="Bruce D."/>
            <person name="Creasy T."/>
            <person name="Daugherty S.C."/>
            <person name="Davidsen T.M."/>
            <person name="DeBoy R.T."/>
            <person name="Detter J.C."/>
            <person name="Dodson R.J."/>
            <person name="Durkin A.S."/>
            <person name="Ganapathy A."/>
            <person name="Gwinn-Giglio M."/>
            <person name="Han C.S."/>
            <person name="Khouri H."/>
            <person name="Kiss H."/>
            <person name="Kothari S.P."/>
            <person name="Madupu R."/>
            <person name="Nelson K.E."/>
            <person name="Nelson W.C."/>
            <person name="Paulsen I."/>
            <person name="Penn K."/>
            <person name="Ren Q."/>
            <person name="Rosovitz M.J."/>
            <person name="Selengut J.D."/>
            <person name="Shrivastava S."/>
            <person name="Sullivan S.A."/>
            <person name="Tapia R."/>
            <person name="Thompson L.S."/>
            <person name="Watkins K.L."/>
            <person name="Yang Q."/>
            <person name="Yu C."/>
            <person name="Zafar N."/>
            <person name="Zhou L."/>
            <person name="Kuske C.R."/>
        </authorList>
    </citation>
    <scope>NUCLEOTIDE SEQUENCE [LARGE SCALE GENOMIC DNA]</scope>
    <source>
        <strain>Ellin345</strain>
    </source>
</reference>
<keyword id="KW-0066">ATP synthesis</keyword>
<keyword id="KW-0997">Cell inner membrane</keyword>
<keyword id="KW-1003">Cell membrane</keyword>
<keyword id="KW-0138">CF(0)</keyword>
<keyword id="KW-0375">Hydrogen ion transport</keyword>
<keyword id="KW-0406">Ion transport</keyword>
<keyword id="KW-0472">Membrane</keyword>
<keyword id="KW-1185">Reference proteome</keyword>
<keyword id="KW-0812">Transmembrane</keyword>
<keyword id="KW-1133">Transmembrane helix</keyword>
<keyword id="KW-0813">Transport</keyword>
<name>ATP6_KORVE</name>
<protein>
    <recommendedName>
        <fullName evidence="1">ATP synthase subunit a</fullName>
    </recommendedName>
    <alternativeName>
        <fullName evidence="1">ATP synthase F0 sector subunit a</fullName>
    </alternativeName>
    <alternativeName>
        <fullName evidence="1">F-ATPase subunit 6</fullName>
    </alternativeName>
</protein>
<dbReference type="EMBL" id="CP000360">
    <property type="protein sequence ID" value="ABF40301.1"/>
    <property type="molecule type" value="Genomic_DNA"/>
</dbReference>
<dbReference type="RefSeq" id="WP_011522103.1">
    <property type="nucleotide sequence ID" value="NC_008009.1"/>
</dbReference>
<dbReference type="SMR" id="Q1IS49"/>
<dbReference type="STRING" id="204669.Acid345_1299"/>
<dbReference type="EnsemblBacteria" id="ABF40301">
    <property type="protein sequence ID" value="ABF40301"/>
    <property type="gene ID" value="Acid345_1299"/>
</dbReference>
<dbReference type="KEGG" id="aba:Acid345_1299"/>
<dbReference type="eggNOG" id="COG0356">
    <property type="taxonomic scope" value="Bacteria"/>
</dbReference>
<dbReference type="HOGENOM" id="CLU_041018_2_2_0"/>
<dbReference type="OrthoDB" id="9789241at2"/>
<dbReference type="Proteomes" id="UP000002432">
    <property type="component" value="Chromosome"/>
</dbReference>
<dbReference type="GO" id="GO:0005886">
    <property type="term" value="C:plasma membrane"/>
    <property type="evidence" value="ECO:0007669"/>
    <property type="project" value="UniProtKB-SubCell"/>
</dbReference>
<dbReference type="GO" id="GO:0045259">
    <property type="term" value="C:proton-transporting ATP synthase complex"/>
    <property type="evidence" value="ECO:0007669"/>
    <property type="project" value="UniProtKB-KW"/>
</dbReference>
<dbReference type="GO" id="GO:0046933">
    <property type="term" value="F:proton-transporting ATP synthase activity, rotational mechanism"/>
    <property type="evidence" value="ECO:0007669"/>
    <property type="project" value="UniProtKB-UniRule"/>
</dbReference>
<dbReference type="GO" id="GO:0042777">
    <property type="term" value="P:proton motive force-driven plasma membrane ATP synthesis"/>
    <property type="evidence" value="ECO:0007669"/>
    <property type="project" value="TreeGrafter"/>
</dbReference>
<dbReference type="CDD" id="cd00310">
    <property type="entry name" value="ATP-synt_Fo_a_6"/>
    <property type="match status" value="1"/>
</dbReference>
<dbReference type="Gene3D" id="1.20.120.220">
    <property type="entry name" value="ATP synthase, F0 complex, subunit A"/>
    <property type="match status" value="1"/>
</dbReference>
<dbReference type="HAMAP" id="MF_01393">
    <property type="entry name" value="ATP_synth_a_bact"/>
    <property type="match status" value="1"/>
</dbReference>
<dbReference type="InterPro" id="IPR045082">
    <property type="entry name" value="ATP_syn_F0_a_bact/chloroplast"/>
</dbReference>
<dbReference type="InterPro" id="IPR000568">
    <property type="entry name" value="ATP_synth_F0_asu"/>
</dbReference>
<dbReference type="InterPro" id="IPR023011">
    <property type="entry name" value="ATP_synth_F0_asu_AS"/>
</dbReference>
<dbReference type="InterPro" id="IPR035908">
    <property type="entry name" value="F0_ATP_A_sf"/>
</dbReference>
<dbReference type="NCBIfam" id="TIGR01131">
    <property type="entry name" value="ATP_synt_6_or_A"/>
    <property type="match status" value="1"/>
</dbReference>
<dbReference type="PANTHER" id="PTHR42823">
    <property type="entry name" value="ATP SYNTHASE SUBUNIT A, CHLOROPLASTIC"/>
    <property type="match status" value="1"/>
</dbReference>
<dbReference type="PANTHER" id="PTHR42823:SF3">
    <property type="entry name" value="ATP SYNTHASE SUBUNIT A, CHLOROPLASTIC"/>
    <property type="match status" value="1"/>
</dbReference>
<dbReference type="Pfam" id="PF00119">
    <property type="entry name" value="ATP-synt_A"/>
    <property type="match status" value="1"/>
</dbReference>
<dbReference type="PRINTS" id="PR00123">
    <property type="entry name" value="ATPASEA"/>
</dbReference>
<dbReference type="SUPFAM" id="SSF81336">
    <property type="entry name" value="F1F0 ATP synthase subunit A"/>
    <property type="match status" value="1"/>
</dbReference>
<dbReference type="PROSITE" id="PS00449">
    <property type="entry name" value="ATPASE_A"/>
    <property type="match status" value="1"/>
</dbReference>
<comment type="function">
    <text evidence="1">Key component of the proton channel; it plays a direct role in the translocation of protons across the membrane.</text>
</comment>
<comment type="subunit">
    <text evidence="1">F-type ATPases have 2 components, CF(1) - the catalytic core - and CF(0) - the membrane proton channel. CF(1) has five subunits: alpha(3), beta(3), gamma(1), delta(1), epsilon(1). CF(0) has three main subunits: a(1), b(2) and c(9-12). The alpha and beta chains form an alternating ring which encloses part of the gamma chain. CF(1) is attached to CF(0) by a central stalk formed by the gamma and epsilon chains, while a peripheral stalk is formed by the delta and b chains.</text>
</comment>
<comment type="subcellular location">
    <subcellularLocation>
        <location evidence="1">Cell inner membrane</location>
        <topology evidence="1">Multi-pass membrane protein</topology>
    </subcellularLocation>
</comment>
<comment type="similarity">
    <text evidence="1">Belongs to the ATPase A chain family.</text>
</comment>
<evidence type="ECO:0000255" key="1">
    <source>
        <dbReference type="HAMAP-Rule" id="MF_01393"/>
    </source>
</evidence>
<sequence length="245" mass="27397">MPHQLWFTAFLNQYLAGPVSAMMSVLHVPNPHPRAPISNYVAMEILVFLLLVLFFIATRISLSWDKPGVLQHIAEGMNNFVSNQGEEMIGHGYETYTSYIVTLGVFILSMNLIGLIPGFEAPTAFPSVPLGCALVTWFFYHVHGLRENGVIGYLKHFLGPVWWISPLLFVIEICSHFARIMSLTIRLYANMFAGDMVTLAFFSLVPLGFPVVFMGLHIFVSLIQTYIFITLAAVYLAEATAHGHD</sequence>